<gene>
    <name evidence="1" type="primary">proA</name>
    <name type="ordered locus">RSc2741</name>
    <name type="ORF">RS00113</name>
</gene>
<protein>
    <recommendedName>
        <fullName evidence="1">Gamma-glutamyl phosphate reductase</fullName>
        <shortName evidence="1">GPR</shortName>
        <ecNumber evidence="1">1.2.1.41</ecNumber>
    </recommendedName>
    <alternativeName>
        <fullName evidence="1">Glutamate-5-semialdehyde dehydrogenase</fullName>
    </alternativeName>
    <alternativeName>
        <fullName evidence="1">Glutamyl-gamma-semialdehyde dehydrogenase</fullName>
        <shortName evidence="1">GSA dehydrogenase</shortName>
    </alternativeName>
</protein>
<evidence type="ECO:0000255" key="1">
    <source>
        <dbReference type="HAMAP-Rule" id="MF_00412"/>
    </source>
</evidence>
<comment type="function">
    <text evidence="1">Catalyzes the NADPH-dependent reduction of L-glutamate 5-phosphate into L-glutamate 5-semialdehyde and phosphate. The product spontaneously undergoes cyclization to form 1-pyrroline-5-carboxylate.</text>
</comment>
<comment type="catalytic activity">
    <reaction evidence="1">
        <text>L-glutamate 5-semialdehyde + phosphate + NADP(+) = L-glutamyl 5-phosphate + NADPH + H(+)</text>
        <dbReference type="Rhea" id="RHEA:19541"/>
        <dbReference type="ChEBI" id="CHEBI:15378"/>
        <dbReference type="ChEBI" id="CHEBI:43474"/>
        <dbReference type="ChEBI" id="CHEBI:57783"/>
        <dbReference type="ChEBI" id="CHEBI:58066"/>
        <dbReference type="ChEBI" id="CHEBI:58274"/>
        <dbReference type="ChEBI" id="CHEBI:58349"/>
        <dbReference type="EC" id="1.2.1.41"/>
    </reaction>
</comment>
<comment type="pathway">
    <text evidence="1">Amino-acid biosynthesis; L-proline biosynthesis; L-glutamate 5-semialdehyde from L-glutamate: step 2/2.</text>
</comment>
<comment type="subcellular location">
    <subcellularLocation>
        <location evidence="1">Cytoplasm</location>
    </subcellularLocation>
</comment>
<comment type="similarity">
    <text evidence="1">Belongs to the gamma-glutamyl phosphate reductase family.</text>
</comment>
<reference key="1">
    <citation type="journal article" date="2002" name="Nature">
        <title>Genome sequence of the plant pathogen Ralstonia solanacearum.</title>
        <authorList>
            <person name="Salanoubat M."/>
            <person name="Genin S."/>
            <person name="Artiguenave F."/>
            <person name="Gouzy J."/>
            <person name="Mangenot S."/>
            <person name="Arlat M."/>
            <person name="Billault A."/>
            <person name="Brottier P."/>
            <person name="Camus J.-C."/>
            <person name="Cattolico L."/>
            <person name="Chandler M."/>
            <person name="Choisne N."/>
            <person name="Claudel-Renard C."/>
            <person name="Cunnac S."/>
            <person name="Demange N."/>
            <person name="Gaspin C."/>
            <person name="Lavie M."/>
            <person name="Moisan A."/>
            <person name="Robert C."/>
            <person name="Saurin W."/>
            <person name="Schiex T."/>
            <person name="Siguier P."/>
            <person name="Thebault P."/>
            <person name="Whalen M."/>
            <person name="Wincker P."/>
            <person name="Levy M."/>
            <person name="Weissenbach J."/>
            <person name="Boucher C.A."/>
        </authorList>
    </citation>
    <scope>NUCLEOTIDE SEQUENCE [LARGE SCALE GENOMIC DNA]</scope>
    <source>
        <strain>ATCC BAA-1114 / GMI1000</strain>
    </source>
</reference>
<name>PROA_RALN1</name>
<accession>Q8XVT6</accession>
<dbReference type="EC" id="1.2.1.41" evidence="1"/>
<dbReference type="EMBL" id="AL646052">
    <property type="protein sequence ID" value="CAD16448.1"/>
    <property type="molecule type" value="Genomic_DNA"/>
</dbReference>
<dbReference type="RefSeq" id="WP_011002648.1">
    <property type="nucleotide sequence ID" value="NC_003295.1"/>
</dbReference>
<dbReference type="SMR" id="Q8XVT6"/>
<dbReference type="STRING" id="267608.RSc2741"/>
<dbReference type="EnsemblBacteria" id="CAD16448">
    <property type="protein sequence ID" value="CAD16448"/>
    <property type="gene ID" value="RSc2741"/>
</dbReference>
<dbReference type="KEGG" id="rso:RSc2741"/>
<dbReference type="eggNOG" id="COG0014">
    <property type="taxonomic scope" value="Bacteria"/>
</dbReference>
<dbReference type="HOGENOM" id="CLU_030231_0_0_4"/>
<dbReference type="UniPathway" id="UPA00098">
    <property type="reaction ID" value="UER00360"/>
</dbReference>
<dbReference type="PHI-base" id="PHI:123502"/>
<dbReference type="Proteomes" id="UP000001436">
    <property type="component" value="Chromosome"/>
</dbReference>
<dbReference type="GO" id="GO:0005737">
    <property type="term" value="C:cytoplasm"/>
    <property type="evidence" value="ECO:0007669"/>
    <property type="project" value="UniProtKB-SubCell"/>
</dbReference>
<dbReference type="GO" id="GO:0004350">
    <property type="term" value="F:glutamate-5-semialdehyde dehydrogenase activity"/>
    <property type="evidence" value="ECO:0007669"/>
    <property type="project" value="UniProtKB-UniRule"/>
</dbReference>
<dbReference type="GO" id="GO:0050661">
    <property type="term" value="F:NADP binding"/>
    <property type="evidence" value="ECO:0007669"/>
    <property type="project" value="InterPro"/>
</dbReference>
<dbReference type="GO" id="GO:0055129">
    <property type="term" value="P:L-proline biosynthetic process"/>
    <property type="evidence" value="ECO:0007669"/>
    <property type="project" value="UniProtKB-UniRule"/>
</dbReference>
<dbReference type="CDD" id="cd07079">
    <property type="entry name" value="ALDH_F18-19_ProA-GPR"/>
    <property type="match status" value="1"/>
</dbReference>
<dbReference type="FunFam" id="3.40.309.10:FF:000006">
    <property type="entry name" value="Gamma-glutamyl phosphate reductase"/>
    <property type="match status" value="1"/>
</dbReference>
<dbReference type="Gene3D" id="3.40.605.10">
    <property type="entry name" value="Aldehyde Dehydrogenase, Chain A, domain 1"/>
    <property type="match status" value="1"/>
</dbReference>
<dbReference type="Gene3D" id="3.40.309.10">
    <property type="entry name" value="Aldehyde Dehydrogenase, Chain A, domain 2"/>
    <property type="match status" value="1"/>
</dbReference>
<dbReference type="HAMAP" id="MF_00412">
    <property type="entry name" value="ProA"/>
    <property type="match status" value="1"/>
</dbReference>
<dbReference type="InterPro" id="IPR016161">
    <property type="entry name" value="Ald_DH/histidinol_DH"/>
</dbReference>
<dbReference type="InterPro" id="IPR016163">
    <property type="entry name" value="Ald_DH_C"/>
</dbReference>
<dbReference type="InterPro" id="IPR016162">
    <property type="entry name" value="Ald_DH_N"/>
</dbReference>
<dbReference type="InterPro" id="IPR015590">
    <property type="entry name" value="Aldehyde_DH_dom"/>
</dbReference>
<dbReference type="InterPro" id="IPR020593">
    <property type="entry name" value="G-glutamylP_reductase_CS"/>
</dbReference>
<dbReference type="InterPro" id="IPR012134">
    <property type="entry name" value="Glu-5-SA_DH"/>
</dbReference>
<dbReference type="InterPro" id="IPR000965">
    <property type="entry name" value="GPR_dom"/>
</dbReference>
<dbReference type="NCBIfam" id="NF001221">
    <property type="entry name" value="PRK00197.1"/>
    <property type="match status" value="1"/>
</dbReference>
<dbReference type="NCBIfam" id="TIGR00407">
    <property type="entry name" value="proA"/>
    <property type="match status" value="1"/>
</dbReference>
<dbReference type="PANTHER" id="PTHR11063:SF8">
    <property type="entry name" value="DELTA-1-PYRROLINE-5-CARBOXYLATE SYNTHASE"/>
    <property type="match status" value="1"/>
</dbReference>
<dbReference type="PANTHER" id="PTHR11063">
    <property type="entry name" value="GLUTAMATE SEMIALDEHYDE DEHYDROGENASE"/>
    <property type="match status" value="1"/>
</dbReference>
<dbReference type="Pfam" id="PF00171">
    <property type="entry name" value="Aldedh"/>
    <property type="match status" value="2"/>
</dbReference>
<dbReference type="PIRSF" id="PIRSF000151">
    <property type="entry name" value="GPR"/>
    <property type="match status" value="1"/>
</dbReference>
<dbReference type="SUPFAM" id="SSF53720">
    <property type="entry name" value="ALDH-like"/>
    <property type="match status" value="1"/>
</dbReference>
<dbReference type="PROSITE" id="PS01223">
    <property type="entry name" value="PROA"/>
    <property type="match status" value="1"/>
</dbReference>
<keyword id="KW-0028">Amino-acid biosynthesis</keyword>
<keyword id="KW-0963">Cytoplasm</keyword>
<keyword id="KW-0521">NADP</keyword>
<keyword id="KW-0560">Oxidoreductase</keyword>
<keyword id="KW-0641">Proline biosynthesis</keyword>
<keyword id="KW-1185">Reference proteome</keyword>
<proteinExistence type="inferred from homology"/>
<organism>
    <name type="scientific">Ralstonia nicotianae (strain ATCC BAA-1114 / GMI1000)</name>
    <name type="common">Ralstonia solanacearum</name>
    <dbReference type="NCBI Taxonomy" id="267608"/>
    <lineage>
        <taxon>Bacteria</taxon>
        <taxon>Pseudomonadati</taxon>
        <taxon>Pseudomonadota</taxon>
        <taxon>Betaproteobacteria</taxon>
        <taxon>Burkholderiales</taxon>
        <taxon>Burkholderiaceae</taxon>
        <taxon>Ralstonia</taxon>
        <taxon>Ralstonia solanacearum species complex</taxon>
    </lineage>
</organism>
<feature type="chain" id="PRO_0000189770" description="Gamma-glutamyl phosphate reductase">
    <location>
        <begin position="1"/>
        <end position="426"/>
    </location>
</feature>
<sequence length="426" mass="45693">MKQFDVNEYMALVGRQARAASRGMARAGTAQKNRALLHLAAAIRRDAARLKDVNARDVERARANGQDAAFIDRLTLTDRAIETMAAGLEQIAALPDPIGEISNVKFRPTGIQVGQMRVPLGVIGIIYESRPNVTVDAAALCIKSGNATILRGGSEAIESNGALAALIEEGLADAGLPATAVQVVATPDRAAVGKLITMTEYVDVIVPRGGKSLIARLMEEARVPMIKHLDGICHVYIDVDADIDKAVRICDNAKTQRYAPCNTMETLLVAREVAARALTPLARIYQDKGVELRVCPDTRATLEAAGFSGLKDATEADWHTEYLAPILSIRTVDGVDAAIEHINTYGSAHTDSIVTENYSTGMRFLREVDSASVMINASTRFADGFEYGLGAEIGISNDKLHARGPVGLEGLTSLKYVVFGHGEIRT</sequence>